<name>DUS2_MOUSE</name>
<gene>
    <name type="primary">Dus2</name>
    <name type="synonym">Dus2l</name>
</gene>
<feature type="chain" id="PRO_0000162158" description="tRNA-dihydrouridine(20) synthase [NAD(P)+]-like">
    <location>
        <begin position="1"/>
        <end position="493"/>
    </location>
</feature>
<feature type="domain" description="DRBM">
    <location>
        <begin position="369"/>
        <end position="436"/>
    </location>
</feature>
<feature type="region of interest" description="Catalytic domain" evidence="1">
    <location>
        <begin position="1"/>
        <end position="333"/>
    </location>
</feature>
<feature type="region of interest" description="Interaction with tRNA" evidence="1">
    <location>
        <begin position="367"/>
        <end position="371"/>
    </location>
</feature>
<feature type="region of interest" description="Interaction with tRNA" evidence="1">
    <location>
        <begin position="420"/>
        <end position="424"/>
    </location>
</feature>
<feature type="region of interest" description="Disordered" evidence="2">
    <location>
        <begin position="438"/>
        <end position="472"/>
    </location>
</feature>
<feature type="active site" description="Proton donor" evidence="1">
    <location>
        <position position="116"/>
    </location>
</feature>
<feature type="binding site" evidence="1">
    <location>
        <begin position="18"/>
        <end position="20"/>
    </location>
    <ligand>
        <name>FMN</name>
        <dbReference type="ChEBI" id="CHEBI:58210"/>
    </ligand>
</feature>
<feature type="binding site" evidence="1">
    <location>
        <position position="43"/>
    </location>
    <ligand>
        <name>FMN</name>
        <dbReference type="ChEBI" id="CHEBI:58210"/>
    </ligand>
</feature>
<feature type="binding site" evidence="1">
    <location>
        <position position="87"/>
    </location>
    <ligand>
        <name>FMN</name>
        <dbReference type="ChEBI" id="CHEBI:58210"/>
    </ligand>
</feature>
<feature type="binding site" evidence="1">
    <location>
        <position position="155"/>
    </location>
    <ligand>
        <name>FMN</name>
        <dbReference type="ChEBI" id="CHEBI:58210"/>
    </ligand>
</feature>
<feature type="binding site" evidence="1">
    <location>
        <position position="183"/>
    </location>
    <ligand>
        <name>FMN</name>
        <dbReference type="ChEBI" id="CHEBI:58210"/>
    </ligand>
</feature>
<feature type="binding site" evidence="1">
    <location>
        <begin position="214"/>
        <end position="216"/>
    </location>
    <ligand>
        <name>FMN</name>
        <dbReference type="ChEBI" id="CHEBI:58210"/>
    </ligand>
</feature>
<feature type="binding site" evidence="1">
    <location>
        <begin position="242"/>
        <end position="243"/>
    </location>
    <ligand>
        <name>FMN</name>
        <dbReference type="ChEBI" id="CHEBI:58210"/>
    </ligand>
</feature>
<feature type="modified residue" description="Phosphoserine" evidence="1">
    <location>
        <position position="445"/>
    </location>
</feature>
<feature type="strand" evidence="4">
    <location>
        <begin position="349"/>
        <end position="355"/>
    </location>
</feature>
<feature type="helix" evidence="4">
    <location>
        <begin position="361"/>
        <end position="363"/>
    </location>
</feature>
<feature type="helix" evidence="4">
    <location>
        <begin position="370"/>
        <end position="380"/>
    </location>
</feature>
<feature type="strand" evidence="4">
    <location>
        <begin position="390"/>
        <end position="392"/>
    </location>
</feature>
<feature type="strand" evidence="4">
    <location>
        <begin position="394"/>
        <end position="396"/>
    </location>
</feature>
<feature type="strand" evidence="4">
    <location>
        <begin position="399"/>
        <end position="405"/>
    </location>
</feature>
<feature type="strand" evidence="4">
    <location>
        <begin position="408"/>
        <end position="414"/>
    </location>
</feature>
<feature type="strand" evidence="4">
    <location>
        <begin position="416"/>
        <end position="418"/>
    </location>
</feature>
<feature type="helix" evidence="4">
    <location>
        <begin position="419"/>
        <end position="434"/>
    </location>
</feature>
<feature type="strand" evidence="4">
    <location>
        <begin position="437"/>
        <end position="439"/>
    </location>
</feature>
<feature type="turn" evidence="4">
    <location>
        <begin position="440"/>
        <end position="442"/>
    </location>
</feature>
<comment type="function">
    <text evidence="1">Catalyzes the NADPH-dependent synthesis of dihydrouridine, a modified base found in the D-loop of most tRNAs. Specifically modifies U20 in cytoplasmic tRNAs. Activity depends on the presence of guanosine at position 19 in the tRNA substrate. Negatively regulates the activation of EIF2AK2/PKR.</text>
</comment>
<comment type="catalytic activity">
    <reaction evidence="1">
        <text>5,6-dihydrouridine(20) in tRNA + NADP(+) = uridine(20) in tRNA + NADPH + H(+)</text>
        <dbReference type="Rhea" id="RHEA:53336"/>
        <dbReference type="Rhea" id="RHEA-COMP:13533"/>
        <dbReference type="Rhea" id="RHEA-COMP:13534"/>
        <dbReference type="ChEBI" id="CHEBI:15378"/>
        <dbReference type="ChEBI" id="CHEBI:57783"/>
        <dbReference type="ChEBI" id="CHEBI:58349"/>
        <dbReference type="ChEBI" id="CHEBI:65315"/>
        <dbReference type="ChEBI" id="CHEBI:74443"/>
        <dbReference type="EC" id="1.3.1.91"/>
    </reaction>
    <physiologicalReaction direction="right-to-left" evidence="1">
        <dbReference type="Rhea" id="RHEA:53338"/>
    </physiologicalReaction>
</comment>
<comment type="cofactor">
    <cofactor evidence="1">
        <name>FMN</name>
        <dbReference type="ChEBI" id="CHEBI:58210"/>
    </cofactor>
</comment>
<comment type="subunit">
    <text evidence="1">Interacts with EPRS1. Interacts (via DRBM domain) with PRKRA and EIF2AK2/PKR (via DRBM 1 domain).</text>
</comment>
<comment type="subcellular location">
    <subcellularLocation>
        <location evidence="1">Cytoplasm</location>
    </subcellularLocation>
    <subcellularLocation>
        <location evidence="1">Endoplasmic reticulum</location>
    </subcellularLocation>
    <text evidence="1">Mainly at the endoplasmic reticulum.</text>
</comment>
<comment type="domain">
    <text evidence="1">Efficient dihydrouridine synthesis requires the presence of both the catalytic domain and the C-terminal RNA-binding DRBM domain.</text>
</comment>
<comment type="similarity">
    <text evidence="3">Belongs to the Dus family. Dus2 subfamily.</text>
</comment>
<sequence>MIVNSLSLCYHNKLILAPMVRVGTLPMRLLALDYGADIVYCEELIDLKMLQCKRVVNEVLSTVDFVAPDDRVVFRTCEREQSRVVFQMGTSDAERALAVARLVENDVAGIDVNMGCPKEYSTKGGMGAALLSDPDKIEKILSTLVKGTHRPVTCKIRILPSLEDTLNLVKRIERTGISAIAVHGRNRDERPQHPVSCEVIRAIAETLSIPVIANGGSHDHIQQHVDIEDFRQATAASSVMVARAAMWNPSIFLKDGLRPLEEVMQKYIRYAVQYDNHYTNTKYCLCQMLREQLESPQGRLLHAAQSSQEICEAFGLGAFYEETIRELDARRADLLAKTPEAVEEPAEDTSGIIKMAIRFDRRAYPPQITPKMCLLEWCRREKLPQPVYETVQRTIDRMFCSVVTVAEQKYQSTLWDKSKKLAEQTAAIVCLRSQGLPEGRLGEESPSLNKRKREAPDQDPGGPRVQEPALPGEICKKPFVTLDSSEENLLEGC</sequence>
<reference key="1">
    <citation type="journal article" date="2005" name="Science">
        <title>The transcriptional landscape of the mammalian genome.</title>
        <authorList>
            <person name="Carninci P."/>
            <person name="Kasukawa T."/>
            <person name="Katayama S."/>
            <person name="Gough J."/>
            <person name="Frith M.C."/>
            <person name="Maeda N."/>
            <person name="Oyama R."/>
            <person name="Ravasi T."/>
            <person name="Lenhard B."/>
            <person name="Wells C."/>
            <person name="Kodzius R."/>
            <person name="Shimokawa K."/>
            <person name="Bajic V.B."/>
            <person name="Brenner S.E."/>
            <person name="Batalov S."/>
            <person name="Forrest A.R."/>
            <person name="Zavolan M."/>
            <person name="Davis M.J."/>
            <person name="Wilming L.G."/>
            <person name="Aidinis V."/>
            <person name="Allen J.E."/>
            <person name="Ambesi-Impiombato A."/>
            <person name="Apweiler R."/>
            <person name="Aturaliya R.N."/>
            <person name="Bailey T.L."/>
            <person name="Bansal M."/>
            <person name="Baxter L."/>
            <person name="Beisel K.W."/>
            <person name="Bersano T."/>
            <person name="Bono H."/>
            <person name="Chalk A.M."/>
            <person name="Chiu K.P."/>
            <person name="Choudhary V."/>
            <person name="Christoffels A."/>
            <person name="Clutterbuck D.R."/>
            <person name="Crowe M.L."/>
            <person name="Dalla E."/>
            <person name="Dalrymple B.P."/>
            <person name="de Bono B."/>
            <person name="Della Gatta G."/>
            <person name="di Bernardo D."/>
            <person name="Down T."/>
            <person name="Engstrom P."/>
            <person name="Fagiolini M."/>
            <person name="Faulkner G."/>
            <person name="Fletcher C.F."/>
            <person name="Fukushima T."/>
            <person name="Furuno M."/>
            <person name="Futaki S."/>
            <person name="Gariboldi M."/>
            <person name="Georgii-Hemming P."/>
            <person name="Gingeras T.R."/>
            <person name="Gojobori T."/>
            <person name="Green R.E."/>
            <person name="Gustincich S."/>
            <person name="Harbers M."/>
            <person name="Hayashi Y."/>
            <person name="Hensch T.K."/>
            <person name="Hirokawa N."/>
            <person name="Hill D."/>
            <person name="Huminiecki L."/>
            <person name="Iacono M."/>
            <person name="Ikeo K."/>
            <person name="Iwama A."/>
            <person name="Ishikawa T."/>
            <person name="Jakt M."/>
            <person name="Kanapin A."/>
            <person name="Katoh M."/>
            <person name="Kawasawa Y."/>
            <person name="Kelso J."/>
            <person name="Kitamura H."/>
            <person name="Kitano H."/>
            <person name="Kollias G."/>
            <person name="Krishnan S.P."/>
            <person name="Kruger A."/>
            <person name="Kummerfeld S.K."/>
            <person name="Kurochkin I.V."/>
            <person name="Lareau L.F."/>
            <person name="Lazarevic D."/>
            <person name="Lipovich L."/>
            <person name="Liu J."/>
            <person name="Liuni S."/>
            <person name="McWilliam S."/>
            <person name="Madan Babu M."/>
            <person name="Madera M."/>
            <person name="Marchionni L."/>
            <person name="Matsuda H."/>
            <person name="Matsuzawa S."/>
            <person name="Miki H."/>
            <person name="Mignone F."/>
            <person name="Miyake S."/>
            <person name="Morris K."/>
            <person name="Mottagui-Tabar S."/>
            <person name="Mulder N."/>
            <person name="Nakano N."/>
            <person name="Nakauchi H."/>
            <person name="Ng P."/>
            <person name="Nilsson R."/>
            <person name="Nishiguchi S."/>
            <person name="Nishikawa S."/>
            <person name="Nori F."/>
            <person name="Ohara O."/>
            <person name="Okazaki Y."/>
            <person name="Orlando V."/>
            <person name="Pang K.C."/>
            <person name="Pavan W.J."/>
            <person name="Pavesi G."/>
            <person name="Pesole G."/>
            <person name="Petrovsky N."/>
            <person name="Piazza S."/>
            <person name="Reed J."/>
            <person name="Reid J.F."/>
            <person name="Ring B.Z."/>
            <person name="Ringwald M."/>
            <person name="Rost B."/>
            <person name="Ruan Y."/>
            <person name="Salzberg S.L."/>
            <person name="Sandelin A."/>
            <person name="Schneider C."/>
            <person name="Schoenbach C."/>
            <person name="Sekiguchi K."/>
            <person name="Semple C.A."/>
            <person name="Seno S."/>
            <person name="Sessa L."/>
            <person name="Sheng Y."/>
            <person name="Shibata Y."/>
            <person name="Shimada H."/>
            <person name="Shimada K."/>
            <person name="Silva D."/>
            <person name="Sinclair B."/>
            <person name="Sperling S."/>
            <person name="Stupka E."/>
            <person name="Sugiura K."/>
            <person name="Sultana R."/>
            <person name="Takenaka Y."/>
            <person name="Taki K."/>
            <person name="Tammoja K."/>
            <person name="Tan S.L."/>
            <person name="Tang S."/>
            <person name="Taylor M.S."/>
            <person name="Tegner J."/>
            <person name="Teichmann S.A."/>
            <person name="Ueda H.R."/>
            <person name="van Nimwegen E."/>
            <person name="Verardo R."/>
            <person name="Wei C.L."/>
            <person name="Yagi K."/>
            <person name="Yamanishi H."/>
            <person name="Zabarovsky E."/>
            <person name="Zhu S."/>
            <person name="Zimmer A."/>
            <person name="Hide W."/>
            <person name="Bult C."/>
            <person name="Grimmond S.M."/>
            <person name="Teasdale R.D."/>
            <person name="Liu E.T."/>
            <person name="Brusic V."/>
            <person name="Quackenbush J."/>
            <person name="Wahlestedt C."/>
            <person name="Mattick J.S."/>
            <person name="Hume D.A."/>
            <person name="Kai C."/>
            <person name="Sasaki D."/>
            <person name="Tomaru Y."/>
            <person name="Fukuda S."/>
            <person name="Kanamori-Katayama M."/>
            <person name="Suzuki M."/>
            <person name="Aoki J."/>
            <person name="Arakawa T."/>
            <person name="Iida J."/>
            <person name="Imamura K."/>
            <person name="Itoh M."/>
            <person name="Kato T."/>
            <person name="Kawaji H."/>
            <person name="Kawagashira N."/>
            <person name="Kawashima T."/>
            <person name="Kojima M."/>
            <person name="Kondo S."/>
            <person name="Konno H."/>
            <person name="Nakano K."/>
            <person name="Ninomiya N."/>
            <person name="Nishio T."/>
            <person name="Okada M."/>
            <person name="Plessy C."/>
            <person name="Shibata K."/>
            <person name="Shiraki T."/>
            <person name="Suzuki S."/>
            <person name="Tagami M."/>
            <person name="Waki K."/>
            <person name="Watahiki A."/>
            <person name="Okamura-Oho Y."/>
            <person name="Suzuki H."/>
            <person name="Kawai J."/>
            <person name="Hayashizaki Y."/>
        </authorList>
    </citation>
    <scope>NUCLEOTIDE SEQUENCE [LARGE SCALE MRNA]</scope>
    <source>
        <strain>C57BL/6J</strain>
        <tissue>Tongue</tissue>
    </source>
</reference>
<reference key="2">
    <citation type="journal article" date="2004" name="Genome Res.">
        <title>The status, quality, and expansion of the NIH full-length cDNA project: the Mammalian Gene Collection (MGC).</title>
        <authorList>
            <consortium name="The MGC Project Team"/>
        </authorList>
    </citation>
    <scope>NUCLEOTIDE SEQUENCE [LARGE SCALE MRNA] OF 205-493</scope>
    <source>
        <strain>C57BL/6J</strain>
        <tissue>Brain</tissue>
    </source>
</reference>
<reference key="3">
    <citation type="journal article" date="2010" name="Cell">
        <title>A tissue-specific atlas of mouse protein phosphorylation and expression.</title>
        <authorList>
            <person name="Huttlin E.L."/>
            <person name="Jedrychowski M.P."/>
            <person name="Elias J.E."/>
            <person name="Goswami T."/>
            <person name="Rad R."/>
            <person name="Beausoleil S.A."/>
            <person name="Villen J."/>
            <person name="Haas W."/>
            <person name="Sowa M.E."/>
            <person name="Gygi S.P."/>
        </authorList>
    </citation>
    <scope>IDENTIFICATION BY MASS SPECTROMETRY [LARGE SCALE ANALYSIS]</scope>
    <source>
        <tissue>Spleen</tissue>
    </source>
</reference>
<reference key="4">
    <citation type="submission" date="2004-11" db="PDB data bank">
        <title>Solution structure of the DSRBD from hypothetical protein BAB26260.</title>
        <authorList>
            <consortium name="RIKEN structural genomics initiative (RSGI)"/>
        </authorList>
    </citation>
    <scope>STRUCTURE BY NMR OF 350-464</scope>
</reference>
<accession>Q9D7B1</accession>
<accession>Q6PDX2</accession>
<dbReference type="EC" id="1.3.1.91" evidence="1"/>
<dbReference type="EMBL" id="AK009391">
    <property type="protein sequence ID" value="BAB26260.1"/>
    <property type="molecule type" value="mRNA"/>
</dbReference>
<dbReference type="EMBL" id="BC058431">
    <property type="protein sequence ID" value="AAH58431.1"/>
    <property type="molecule type" value="mRNA"/>
</dbReference>
<dbReference type="CCDS" id="CCDS22627.1"/>
<dbReference type="RefSeq" id="NP_001288105.1">
    <property type="nucleotide sequence ID" value="NM_001301176.1"/>
</dbReference>
<dbReference type="RefSeq" id="NP_079794.1">
    <property type="nucleotide sequence ID" value="NM_025518.4"/>
</dbReference>
<dbReference type="RefSeq" id="XP_006531341.1">
    <property type="nucleotide sequence ID" value="XM_006531278.3"/>
</dbReference>
<dbReference type="PDB" id="1WHN">
    <property type="method" value="NMR"/>
    <property type="chains" value="A=350-464"/>
</dbReference>
<dbReference type="PDBsum" id="1WHN"/>
<dbReference type="BMRB" id="Q9D7B1"/>
<dbReference type="SMR" id="Q9D7B1"/>
<dbReference type="FunCoup" id="Q9D7B1">
    <property type="interactions" value="2889"/>
</dbReference>
<dbReference type="STRING" id="10090.ENSMUSP00000034375"/>
<dbReference type="iPTMnet" id="Q9D7B1"/>
<dbReference type="PhosphoSitePlus" id="Q9D7B1"/>
<dbReference type="SwissPalm" id="Q9D7B1"/>
<dbReference type="PaxDb" id="10090-ENSMUSP00000034375"/>
<dbReference type="ProteomicsDB" id="279583"/>
<dbReference type="Pumba" id="Q9D7B1"/>
<dbReference type="Antibodypedia" id="50008">
    <property type="antibodies" value="138 antibodies from 24 providers"/>
</dbReference>
<dbReference type="Ensembl" id="ENSMUST00000034375.11">
    <property type="protein sequence ID" value="ENSMUSP00000034375.5"/>
    <property type="gene ID" value="ENSMUSG00000031901.13"/>
</dbReference>
<dbReference type="GeneID" id="66369"/>
<dbReference type="KEGG" id="mmu:66369"/>
<dbReference type="UCSC" id="uc009nfa.2">
    <property type="organism name" value="mouse"/>
</dbReference>
<dbReference type="AGR" id="MGI:1913619"/>
<dbReference type="CTD" id="54920"/>
<dbReference type="MGI" id="MGI:1913619">
    <property type="gene designation" value="Dus2"/>
</dbReference>
<dbReference type="VEuPathDB" id="HostDB:ENSMUSG00000031901"/>
<dbReference type="eggNOG" id="KOG2334">
    <property type="taxonomic scope" value="Eukaryota"/>
</dbReference>
<dbReference type="GeneTree" id="ENSGT00550000075019"/>
<dbReference type="HOGENOM" id="CLU_013299_3_0_1"/>
<dbReference type="InParanoid" id="Q9D7B1"/>
<dbReference type="OMA" id="GPIRTNS"/>
<dbReference type="OrthoDB" id="10262250at2759"/>
<dbReference type="PhylomeDB" id="Q9D7B1"/>
<dbReference type="TreeFam" id="TF106151"/>
<dbReference type="Reactome" id="R-MMU-9833482">
    <property type="pathway name" value="PKR-mediated signaling"/>
</dbReference>
<dbReference type="BioGRID-ORCS" id="66369">
    <property type="hits" value="0 hits in 76 CRISPR screens"/>
</dbReference>
<dbReference type="ChiTaRS" id="Dus2">
    <property type="organism name" value="mouse"/>
</dbReference>
<dbReference type="EvolutionaryTrace" id="Q9D7B1"/>
<dbReference type="PRO" id="PR:Q9D7B1"/>
<dbReference type="Proteomes" id="UP000000589">
    <property type="component" value="Chromosome 8"/>
</dbReference>
<dbReference type="RNAct" id="Q9D7B1">
    <property type="molecule type" value="protein"/>
</dbReference>
<dbReference type="Bgee" id="ENSMUSG00000031901">
    <property type="expression patterns" value="Expressed in otolith organ and 218 other cell types or tissues"/>
</dbReference>
<dbReference type="ExpressionAtlas" id="Q9D7B1">
    <property type="expression patterns" value="baseline and differential"/>
</dbReference>
<dbReference type="GO" id="GO:0005829">
    <property type="term" value="C:cytosol"/>
    <property type="evidence" value="ECO:0007669"/>
    <property type="project" value="Ensembl"/>
</dbReference>
<dbReference type="GO" id="GO:0005783">
    <property type="term" value="C:endoplasmic reticulum"/>
    <property type="evidence" value="ECO:0007669"/>
    <property type="project" value="UniProtKB-SubCell"/>
</dbReference>
<dbReference type="GO" id="GO:0005739">
    <property type="term" value="C:mitochondrion"/>
    <property type="evidence" value="ECO:0007005"/>
    <property type="project" value="MGI"/>
</dbReference>
<dbReference type="GO" id="GO:0003725">
    <property type="term" value="F:double-stranded RNA binding"/>
    <property type="evidence" value="ECO:0000250"/>
    <property type="project" value="UniProtKB"/>
</dbReference>
<dbReference type="GO" id="GO:0050660">
    <property type="term" value="F:flavin adenine dinucleotide binding"/>
    <property type="evidence" value="ECO:0007669"/>
    <property type="project" value="InterPro"/>
</dbReference>
<dbReference type="GO" id="GO:0010181">
    <property type="term" value="F:FMN binding"/>
    <property type="evidence" value="ECO:0000250"/>
    <property type="project" value="UniProtKB"/>
</dbReference>
<dbReference type="GO" id="GO:0070402">
    <property type="term" value="F:NADPH binding"/>
    <property type="evidence" value="ECO:0000250"/>
    <property type="project" value="UniProtKB"/>
</dbReference>
<dbReference type="GO" id="GO:0004860">
    <property type="term" value="F:protein kinase inhibitor activity"/>
    <property type="evidence" value="ECO:0000250"/>
    <property type="project" value="UniProtKB"/>
</dbReference>
<dbReference type="GO" id="GO:0000049">
    <property type="term" value="F:tRNA binding"/>
    <property type="evidence" value="ECO:0007669"/>
    <property type="project" value="InterPro"/>
</dbReference>
<dbReference type="GO" id="GO:0017150">
    <property type="term" value="F:tRNA dihydrouridine synthase activity"/>
    <property type="evidence" value="ECO:0000250"/>
    <property type="project" value="UniProtKB"/>
</dbReference>
<dbReference type="GO" id="GO:0102264">
    <property type="term" value="F:tRNA-dihydrouridine20 synthase activity"/>
    <property type="evidence" value="ECO:0000250"/>
    <property type="project" value="UniProtKB"/>
</dbReference>
<dbReference type="GO" id="GO:0140374">
    <property type="term" value="P:antiviral innate immune response"/>
    <property type="evidence" value="ECO:0000250"/>
    <property type="project" value="UniProtKB"/>
</dbReference>
<dbReference type="GO" id="GO:0002943">
    <property type="term" value="P:tRNA dihydrouridine synthesis"/>
    <property type="evidence" value="ECO:0000250"/>
    <property type="project" value="UniProtKB"/>
</dbReference>
<dbReference type="CDD" id="cd19871">
    <property type="entry name" value="DSRM_DUS2L"/>
    <property type="match status" value="1"/>
</dbReference>
<dbReference type="CDD" id="cd02801">
    <property type="entry name" value="DUS_like_FMN"/>
    <property type="match status" value="1"/>
</dbReference>
<dbReference type="FunFam" id="3.20.20.70:FF:000148">
    <property type="entry name" value="tRNA-dihydrouridine(20) synthase [NAD(P)+]-like isoform X1"/>
    <property type="match status" value="1"/>
</dbReference>
<dbReference type="Gene3D" id="3.30.160.20">
    <property type="match status" value="1"/>
</dbReference>
<dbReference type="Gene3D" id="3.20.20.70">
    <property type="entry name" value="Aldolase class I"/>
    <property type="match status" value="1"/>
</dbReference>
<dbReference type="InterPro" id="IPR013785">
    <property type="entry name" value="Aldolase_TIM"/>
</dbReference>
<dbReference type="InterPro" id="IPR014720">
    <property type="entry name" value="dsRBD_dom"/>
</dbReference>
<dbReference type="InterPro" id="IPR035587">
    <property type="entry name" value="DUS-like_FMN-bd"/>
</dbReference>
<dbReference type="InterPro" id="IPR044463">
    <property type="entry name" value="DUS2_DSRM"/>
</dbReference>
<dbReference type="InterPro" id="IPR052582">
    <property type="entry name" value="tRNA-DUS-like"/>
</dbReference>
<dbReference type="InterPro" id="IPR018517">
    <property type="entry name" value="tRNA_hU_synthase_CS"/>
</dbReference>
<dbReference type="PANTHER" id="PTHR45936">
    <property type="entry name" value="TRNA-DIHYDROURIDINE(20) SYNTHASE [NAD(P)+]-LIKE"/>
    <property type="match status" value="1"/>
</dbReference>
<dbReference type="PANTHER" id="PTHR45936:SF1">
    <property type="entry name" value="TRNA-DIHYDROURIDINE(20) SYNTHASE [NAD(P)+]-LIKE"/>
    <property type="match status" value="1"/>
</dbReference>
<dbReference type="Pfam" id="PF00035">
    <property type="entry name" value="dsrm"/>
    <property type="match status" value="1"/>
</dbReference>
<dbReference type="Pfam" id="PF01207">
    <property type="entry name" value="Dus"/>
    <property type="match status" value="1"/>
</dbReference>
<dbReference type="SMART" id="SM00358">
    <property type="entry name" value="DSRM"/>
    <property type="match status" value="1"/>
</dbReference>
<dbReference type="SUPFAM" id="SSF54768">
    <property type="entry name" value="dsRNA-binding domain-like"/>
    <property type="match status" value="1"/>
</dbReference>
<dbReference type="SUPFAM" id="SSF51395">
    <property type="entry name" value="FMN-linked oxidoreductases"/>
    <property type="match status" value="1"/>
</dbReference>
<dbReference type="PROSITE" id="PS01136">
    <property type="entry name" value="UPF0034"/>
    <property type="match status" value="1"/>
</dbReference>
<protein>
    <recommendedName>
        <fullName>tRNA-dihydrouridine(20) synthase [NAD(P)+]-like</fullName>
        <ecNumber evidence="1">1.3.1.91</ecNumber>
    </recommendedName>
    <alternativeName>
        <fullName>Dihydrouridine synthase 2</fullName>
    </alternativeName>
    <alternativeName>
        <fullName>tRNA-dihydrouridine synthase 2-like</fullName>
    </alternativeName>
</protein>
<organism>
    <name type="scientific">Mus musculus</name>
    <name type="common">Mouse</name>
    <dbReference type="NCBI Taxonomy" id="10090"/>
    <lineage>
        <taxon>Eukaryota</taxon>
        <taxon>Metazoa</taxon>
        <taxon>Chordata</taxon>
        <taxon>Craniata</taxon>
        <taxon>Vertebrata</taxon>
        <taxon>Euteleostomi</taxon>
        <taxon>Mammalia</taxon>
        <taxon>Eutheria</taxon>
        <taxon>Euarchontoglires</taxon>
        <taxon>Glires</taxon>
        <taxon>Rodentia</taxon>
        <taxon>Myomorpha</taxon>
        <taxon>Muroidea</taxon>
        <taxon>Muridae</taxon>
        <taxon>Murinae</taxon>
        <taxon>Mus</taxon>
        <taxon>Mus</taxon>
    </lineage>
</organism>
<keyword id="KW-0002">3D-structure</keyword>
<keyword id="KW-0963">Cytoplasm</keyword>
<keyword id="KW-0256">Endoplasmic reticulum</keyword>
<keyword id="KW-0285">Flavoprotein</keyword>
<keyword id="KW-0288">FMN</keyword>
<keyword id="KW-0560">Oxidoreductase</keyword>
<keyword id="KW-0597">Phosphoprotein</keyword>
<keyword id="KW-1185">Reference proteome</keyword>
<keyword id="KW-0694">RNA-binding</keyword>
<keyword id="KW-0819">tRNA processing</keyword>
<evidence type="ECO:0000250" key="1">
    <source>
        <dbReference type="UniProtKB" id="Q9NX74"/>
    </source>
</evidence>
<evidence type="ECO:0000256" key="2">
    <source>
        <dbReference type="SAM" id="MobiDB-lite"/>
    </source>
</evidence>
<evidence type="ECO:0000305" key="3"/>
<evidence type="ECO:0007829" key="4">
    <source>
        <dbReference type="PDB" id="1WHN"/>
    </source>
</evidence>
<proteinExistence type="evidence at protein level"/>